<accession>P58036</accession>
<accession>A5A629</accession>
<organism>
    <name type="scientific">Escherichia coli (strain K12)</name>
    <dbReference type="NCBI Taxonomy" id="83333"/>
    <lineage>
        <taxon>Bacteria</taxon>
        <taxon>Pseudomonadati</taxon>
        <taxon>Pseudomonadota</taxon>
        <taxon>Gammaproteobacteria</taxon>
        <taxon>Enterobacterales</taxon>
        <taxon>Enterobacteriaceae</taxon>
        <taxon>Escherichia</taxon>
    </lineage>
</organism>
<protein>
    <recommendedName>
        <fullName>Uncharacterized protein YjbS</fullName>
    </recommendedName>
</protein>
<name>YJBS_ECOLI</name>
<feature type="chain" id="PRO_0000169717" description="Uncharacterized protein YjbS">
    <location>
        <begin position="1"/>
        <end position="67"/>
    </location>
</feature>
<proteinExistence type="predicted"/>
<dbReference type="EMBL" id="U00096">
    <property type="protein sequence ID" value="ABP93458.1"/>
    <property type="molecule type" value="Genomic_DNA"/>
</dbReference>
<dbReference type="RefSeq" id="WP_001321562.1">
    <property type="nucleotide sequence ID" value="NZ_SSZK01000016.1"/>
</dbReference>
<dbReference type="RefSeq" id="YP_001165333.1">
    <property type="nucleotide sequence ID" value="NC_000913.3"/>
</dbReference>
<dbReference type="STRING" id="511145.b4621"/>
<dbReference type="PaxDb" id="511145-b4621"/>
<dbReference type="EnsemblBacteria" id="ABP93458">
    <property type="protein sequence ID" value="ABP93458"/>
    <property type="gene ID" value="b4621"/>
</dbReference>
<dbReference type="GeneID" id="5061529"/>
<dbReference type="KEGG" id="eco:b4621"/>
<dbReference type="PATRIC" id="fig|511145.12.peg.4174"/>
<dbReference type="InParanoid" id="P58036"/>
<dbReference type="BioCyc" id="EcoCyc:MONOMER0-2829"/>
<dbReference type="PRO" id="PR:P58036"/>
<dbReference type="Proteomes" id="UP000000625">
    <property type="component" value="Chromosome"/>
</dbReference>
<sequence>MNISYVNSNKTTSLPVELDALNNKDISYAKDFFLYIETQLKIAKDFLDLEKKYQVLLQVKFFTHLLI</sequence>
<reference key="1">
    <citation type="journal article" date="1997" name="Science">
        <title>The complete genome sequence of Escherichia coli K-12.</title>
        <authorList>
            <person name="Blattner F.R."/>
            <person name="Plunkett G. III"/>
            <person name="Bloch C.A."/>
            <person name="Perna N.T."/>
            <person name="Burland V."/>
            <person name="Riley M."/>
            <person name="Collado-Vides J."/>
            <person name="Glasner J.D."/>
            <person name="Rode C.K."/>
            <person name="Mayhew G.F."/>
            <person name="Gregor J."/>
            <person name="Davis N.W."/>
            <person name="Kirkpatrick H.A."/>
            <person name="Goeden M.A."/>
            <person name="Rose D.J."/>
            <person name="Mau B."/>
            <person name="Shao Y."/>
        </authorList>
    </citation>
    <scope>NUCLEOTIDE SEQUENCE [LARGE SCALE GENOMIC DNA]</scope>
    <source>
        <strain>K12 / MG1655 / ATCC 47076</strain>
    </source>
</reference>
<keyword id="KW-1185">Reference proteome</keyword>
<gene>
    <name type="primary">yjbS</name>
    <name type="ordered locus">b4621</name>
    <name type="ORF">b4054.1</name>
</gene>